<evidence type="ECO:0000250" key="1">
    <source>
        <dbReference type="UniProtKB" id="P29022"/>
    </source>
</evidence>
<evidence type="ECO:0000255" key="2"/>
<evidence type="ECO:0000255" key="3">
    <source>
        <dbReference type="PROSITE-ProRule" id="PRU00261"/>
    </source>
</evidence>
<evidence type="ECO:0000269" key="4">
    <source>
    </source>
</evidence>
<evidence type="ECO:0000269" key="5">
    <source>
    </source>
</evidence>
<evidence type="ECO:0000305" key="6"/>
<dbReference type="EC" id="3.2.1.14"/>
<dbReference type="EMBL" id="AC137992">
    <property type="protein sequence ID" value="AAP44624.1"/>
    <property type="molecule type" value="Genomic_DNA"/>
</dbReference>
<dbReference type="EMBL" id="AC145386">
    <property type="protein sequence ID" value="AAR01697.1"/>
    <property type="molecule type" value="Genomic_DNA"/>
</dbReference>
<dbReference type="EMBL" id="DP000009">
    <property type="protein sequence ID" value="ABF96639.1"/>
    <property type="molecule type" value="Genomic_DNA"/>
</dbReference>
<dbReference type="EMBL" id="AP008209">
    <property type="protein sequence ID" value="BAF12287.2"/>
    <property type="molecule type" value="Genomic_DNA"/>
</dbReference>
<dbReference type="EMBL" id="AP014959">
    <property type="protein sequence ID" value="BAS84717.1"/>
    <property type="molecule type" value="Genomic_DNA"/>
</dbReference>
<dbReference type="PIR" id="S15997">
    <property type="entry name" value="S15997"/>
</dbReference>
<dbReference type="RefSeq" id="XP_015629397.1">
    <property type="nucleotide sequence ID" value="XM_015773911.1"/>
</dbReference>
<dbReference type="SMR" id="P25765"/>
<dbReference type="FunCoup" id="P25765">
    <property type="interactions" value="263"/>
</dbReference>
<dbReference type="STRING" id="39947.P25765"/>
<dbReference type="CAZy" id="CBM18">
    <property type="family name" value="Carbohydrate-Binding Module Family 18"/>
</dbReference>
<dbReference type="CAZy" id="GH19">
    <property type="family name" value="Glycoside Hydrolase Family 19"/>
</dbReference>
<dbReference type="PaxDb" id="39947-P25765"/>
<dbReference type="EnsemblPlants" id="Os03t0418000-00">
    <property type="protein sequence ID" value="Os03t0418000-00"/>
    <property type="gene ID" value="Os03g0418000"/>
</dbReference>
<dbReference type="Gramene" id="Os03t0418000-00">
    <property type="protein sequence ID" value="Os03t0418000-00"/>
    <property type="gene ID" value="Os03g0418000"/>
</dbReference>
<dbReference type="KEGG" id="dosa:Os03g0418000"/>
<dbReference type="eggNOG" id="KOG4742">
    <property type="taxonomic scope" value="Eukaryota"/>
</dbReference>
<dbReference type="HOGENOM" id="CLU_045506_1_0_1"/>
<dbReference type="InParanoid" id="P25765"/>
<dbReference type="OMA" id="INGGHEC"/>
<dbReference type="OrthoDB" id="5985073at2759"/>
<dbReference type="Proteomes" id="UP000000763">
    <property type="component" value="Chromosome 3"/>
</dbReference>
<dbReference type="Proteomes" id="UP000059680">
    <property type="component" value="Chromosome 3"/>
</dbReference>
<dbReference type="GO" id="GO:0016231">
    <property type="term" value="F:beta-N-acetylglucosaminidase activity"/>
    <property type="evidence" value="ECO:0000314"/>
    <property type="project" value="Gramene"/>
</dbReference>
<dbReference type="GO" id="GO:0008061">
    <property type="term" value="F:chitin binding"/>
    <property type="evidence" value="ECO:0000250"/>
    <property type="project" value="Gramene"/>
</dbReference>
<dbReference type="GO" id="GO:0004568">
    <property type="term" value="F:chitinase activity"/>
    <property type="evidence" value="ECO:0000314"/>
    <property type="project" value="UniProtKB"/>
</dbReference>
<dbReference type="GO" id="GO:0008843">
    <property type="term" value="F:endochitinase activity"/>
    <property type="evidence" value="ECO:0000314"/>
    <property type="project" value="Gramene"/>
</dbReference>
<dbReference type="GO" id="GO:0006040">
    <property type="term" value="P:amino sugar metabolic process"/>
    <property type="evidence" value="ECO:0000314"/>
    <property type="project" value="Gramene"/>
</dbReference>
<dbReference type="GO" id="GO:0016998">
    <property type="term" value="P:cell wall macromolecule catabolic process"/>
    <property type="evidence" value="ECO:0007669"/>
    <property type="project" value="InterPro"/>
</dbReference>
<dbReference type="GO" id="GO:0006032">
    <property type="term" value="P:chitin catabolic process"/>
    <property type="evidence" value="ECO:0007669"/>
    <property type="project" value="UniProtKB-KW"/>
</dbReference>
<dbReference type="GO" id="GO:0050832">
    <property type="term" value="P:defense response to fungus"/>
    <property type="evidence" value="ECO:0000314"/>
    <property type="project" value="UniProtKB"/>
</dbReference>
<dbReference type="GO" id="GO:0000272">
    <property type="term" value="P:polysaccharide catabolic process"/>
    <property type="evidence" value="ECO:0007669"/>
    <property type="project" value="UniProtKB-KW"/>
</dbReference>
<dbReference type="CDD" id="cd00325">
    <property type="entry name" value="chitinase_GH19"/>
    <property type="match status" value="1"/>
</dbReference>
<dbReference type="CDD" id="cd06921">
    <property type="entry name" value="ChtBD1_GH19_hevein"/>
    <property type="match status" value="1"/>
</dbReference>
<dbReference type="FunFam" id="3.30.60.10:FF:000001">
    <property type="entry name" value="Basic endochitinase"/>
    <property type="match status" value="1"/>
</dbReference>
<dbReference type="FunFam" id="3.30.20.10:FF:000001">
    <property type="entry name" value="Endochitinase (Chitinase)"/>
    <property type="match status" value="1"/>
</dbReference>
<dbReference type="Gene3D" id="1.10.530.10">
    <property type="match status" value="1"/>
</dbReference>
<dbReference type="Gene3D" id="3.30.20.10">
    <property type="entry name" value="Endochitinase, domain 2"/>
    <property type="match status" value="1"/>
</dbReference>
<dbReference type="Gene3D" id="3.30.60.10">
    <property type="entry name" value="Endochitinase-like"/>
    <property type="match status" value="1"/>
</dbReference>
<dbReference type="InterPro" id="IPR001002">
    <property type="entry name" value="Chitin-bd_1"/>
</dbReference>
<dbReference type="InterPro" id="IPR018371">
    <property type="entry name" value="Chitin-binding_1_CS"/>
</dbReference>
<dbReference type="InterPro" id="IPR036861">
    <property type="entry name" value="Endochitinase-like_sf"/>
</dbReference>
<dbReference type="InterPro" id="IPR016283">
    <property type="entry name" value="Glyco_hydro_19"/>
</dbReference>
<dbReference type="InterPro" id="IPR000726">
    <property type="entry name" value="Glyco_hydro_19_cat"/>
</dbReference>
<dbReference type="InterPro" id="IPR023346">
    <property type="entry name" value="Lysozyme-like_dom_sf"/>
</dbReference>
<dbReference type="PANTHER" id="PTHR22595:SF79">
    <property type="entry name" value="CHITINASE 12"/>
    <property type="match status" value="1"/>
</dbReference>
<dbReference type="PANTHER" id="PTHR22595">
    <property type="entry name" value="CHITINASE-RELATED"/>
    <property type="match status" value="1"/>
</dbReference>
<dbReference type="Pfam" id="PF00187">
    <property type="entry name" value="Chitin_bind_1"/>
    <property type="match status" value="1"/>
</dbReference>
<dbReference type="Pfam" id="PF00182">
    <property type="entry name" value="Glyco_hydro_19"/>
    <property type="match status" value="1"/>
</dbReference>
<dbReference type="PIRSF" id="PIRSF001060">
    <property type="entry name" value="Endochitinase"/>
    <property type="match status" value="1"/>
</dbReference>
<dbReference type="PRINTS" id="PR00451">
    <property type="entry name" value="CHITINBINDNG"/>
</dbReference>
<dbReference type="SMART" id="SM00270">
    <property type="entry name" value="ChtBD1"/>
    <property type="match status" value="1"/>
</dbReference>
<dbReference type="SUPFAM" id="SSF53955">
    <property type="entry name" value="Lysozyme-like"/>
    <property type="match status" value="1"/>
</dbReference>
<dbReference type="SUPFAM" id="SSF57016">
    <property type="entry name" value="Plant lectins/antimicrobial peptides"/>
    <property type="match status" value="1"/>
</dbReference>
<dbReference type="PROSITE" id="PS00026">
    <property type="entry name" value="CHIT_BIND_I_1"/>
    <property type="match status" value="1"/>
</dbReference>
<dbReference type="PROSITE" id="PS50941">
    <property type="entry name" value="CHIT_BIND_I_2"/>
    <property type="match status" value="1"/>
</dbReference>
<dbReference type="PROSITE" id="PS00773">
    <property type="entry name" value="CHITINASE_19_1"/>
    <property type="match status" value="1"/>
</dbReference>
<dbReference type="PROSITE" id="PS00774">
    <property type="entry name" value="CHITINASE_19_2"/>
    <property type="match status" value="1"/>
</dbReference>
<gene>
    <name type="primary">Cht12</name>
    <name type="synonym">RCH10</name>
    <name type="ordered locus">Os03g0418000</name>
    <name type="ordered locus">LOC_Os03g30470</name>
    <name type="ORF">OSJNBb0028K20.4</name>
    <name type="ORF">OSJNBb0056B16.17</name>
</gene>
<sequence>MRALAVVAMVATAFLAAAVHAEQCGSQAGGAVCPNCLCCSQFGWCGSTSDYCGAGCQSQCSAAGCGGGGPTPPSGSGGSGVASIVSRSLFDQMLLHRNDAACPASNFYTYDAFVAAASAFPGFAAAGGDADTNKREVAAFLAQTSHETTGGWATAPDGPYAWGYCFKEENGGAAGPDYCQQSAQWPCAAGKKYYGRGPIQLSYNFNYGPAGQAIGADLLGDPDLVASDATVSFDTAFWFWMTPQSPKPSCHAVATGQWTPSADDQAAGRVPGYGVITNIINGGLECGHGEDDRVADRIGFYKRYCDILGVSYDANLDCYSQRPFGS</sequence>
<keyword id="KW-0119">Carbohydrate metabolism</keyword>
<keyword id="KW-0146">Chitin degradation</keyword>
<keyword id="KW-0147">Chitin-binding</keyword>
<keyword id="KW-1015">Disulfide bond</keyword>
<keyword id="KW-0326">Glycosidase</keyword>
<keyword id="KW-0378">Hydrolase</keyword>
<keyword id="KW-0611">Plant defense</keyword>
<keyword id="KW-0624">Polysaccharide degradation</keyword>
<keyword id="KW-1185">Reference proteome</keyword>
<keyword id="KW-0732">Signal</keyword>
<proteinExistence type="evidence at transcript level"/>
<organism>
    <name type="scientific">Oryza sativa subsp. japonica</name>
    <name type="common">Rice</name>
    <dbReference type="NCBI Taxonomy" id="39947"/>
    <lineage>
        <taxon>Eukaryota</taxon>
        <taxon>Viridiplantae</taxon>
        <taxon>Streptophyta</taxon>
        <taxon>Embryophyta</taxon>
        <taxon>Tracheophyta</taxon>
        <taxon>Spermatophyta</taxon>
        <taxon>Magnoliopsida</taxon>
        <taxon>Liliopsida</taxon>
        <taxon>Poales</taxon>
        <taxon>Poaceae</taxon>
        <taxon>BOP clade</taxon>
        <taxon>Oryzoideae</taxon>
        <taxon>Oryzeae</taxon>
        <taxon>Oryzinae</taxon>
        <taxon>Oryza</taxon>
        <taxon>Oryza sativa</taxon>
    </lineage>
</organism>
<accession>P25765</accession>
<accession>A0A0P0VYS9</accession>
<accession>Q0DR51</accession>
<accession>Q7Y1K8</accession>
<feature type="signal peptide" evidence="2">
    <location>
        <begin position="1"/>
        <end position="21"/>
    </location>
</feature>
<feature type="chain" id="PRO_0000005306" description="Chitinase 12">
    <location>
        <begin position="22"/>
        <end position="326"/>
    </location>
</feature>
<feature type="domain" description="Chitin-binding type-1" evidence="3">
    <location>
        <begin position="22"/>
        <end position="62"/>
    </location>
</feature>
<feature type="active site" description="Proton donor" evidence="1">
    <location>
        <position position="147"/>
    </location>
</feature>
<feature type="disulfide bond" evidence="3">
    <location>
        <begin position="24"/>
        <end position="39"/>
    </location>
</feature>
<feature type="disulfide bond" evidence="3">
    <location>
        <begin position="33"/>
        <end position="45"/>
    </location>
</feature>
<feature type="disulfide bond" evidence="3">
    <location>
        <begin position="36"/>
        <end position="65"/>
    </location>
</feature>
<feature type="disulfide bond" evidence="3">
    <location>
        <begin position="38"/>
        <end position="52"/>
    </location>
</feature>
<feature type="disulfide bond" evidence="3">
    <location>
        <begin position="56"/>
        <end position="60"/>
    </location>
</feature>
<feature type="disulfide bond" evidence="3">
    <location>
        <begin position="102"/>
        <end position="165"/>
    </location>
</feature>
<feature type="disulfide bond" evidence="3">
    <location>
        <begin position="179"/>
        <end position="187"/>
    </location>
</feature>
<feature type="disulfide bond" evidence="3">
    <location>
        <begin position="286"/>
        <end position="318"/>
    </location>
</feature>
<reference key="1">
    <citation type="journal article" date="1991" name="Mol. Gen. Genet.">
        <title>Isolation and characterization of a rice gene encoding a basic chitinase.</title>
        <authorList>
            <person name="Zhu Q."/>
            <person name="Lamb C.J."/>
        </authorList>
    </citation>
    <scope>NUCLEOTIDE SEQUENCE [MRNA]</scope>
</reference>
<reference key="2">
    <citation type="journal article" date="2005" name="Genome Res.">
        <title>Sequence, annotation, and analysis of synteny between rice chromosome 3 and diverged grass species.</title>
        <authorList>
            <consortium name="The rice chromosome 3 sequencing consortium"/>
            <person name="Buell C.R."/>
            <person name="Yuan Q."/>
            <person name="Ouyang S."/>
            <person name="Liu J."/>
            <person name="Zhu W."/>
            <person name="Wang A."/>
            <person name="Maiti R."/>
            <person name="Haas B."/>
            <person name="Wortman J."/>
            <person name="Pertea M."/>
            <person name="Jones K.M."/>
            <person name="Kim M."/>
            <person name="Overton L."/>
            <person name="Tsitrin T."/>
            <person name="Fadrosh D."/>
            <person name="Bera J."/>
            <person name="Weaver B."/>
            <person name="Jin S."/>
            <person name="Johri S."/>
            <person name="Reardon M."/>
            <person name="Webb K."/>
            <person name="Hill J."/>
            <person name="Moffat K."/>
            <person name="Tallon L."/>
            <person name="Van Aken S."/>
            <person name="Lewis M."/>
            <person name="Utterback T."/>
            <person name="Feldblyum T."/>
            <person name="Zismann V."/>
            <person name="Iobst S."/>
            <person name="Hsiao J."/>
            <person name="de Vazeille A.R."/>
            <person name="Salzberg S.L."/>
            <person name="White O."/>
            <person name="Fraser C.M."/>
            <person name="Yu Y."/>
            <person name="Kim H."/>
            <person name="Rambo T."/>
            <person name="Currie J."/>
            <person name="Collura K."/>
            <person name="Kernodle-Thompson S."/>
            <person name="Wei F."/>
            <person name="Kudrna K."/>
            <person name="Ammiraju J.S.S."/>
            <person name="Luo M."/>
            <person name="Goicoechea J.L."/>
            <person name="Wing R.A."/>
            <person name="Henry D."/>
            <person name="Oates R."/>
            <person name="Palmer M."/>
            <person name="Pries G."/>
            <person name="Saski C."/>
            <person name="Simmons J."/>
            <person name="Soderlund C."/>
            <person name="Nelson W."/>
            <person name="de la Bastide M."/>
            <person name="Spiegel L."/>
            <person name="Nascimento L."/>
            <person name="Huang E."/>
            <person name="Preston R."/>
            <person name="Zutavern T."/>
            <person name="Palmer L."/>
            <person name="O'Shaughnessy A."/>
            <person name="Dike S."/>
            <person name="McCombie W.R."/>
            <person name="Minx P."/>
            <person name="Cordum H."/>
            <person name="Wilson R."/>
            <person name="Jin W."/>
            <person name="Lee H.R."/>
            <person name="Jiang J."/>
            <person name="Jackson S."/>
        </authorList>
    </citation>
    <scope>NUCLEOTIDE SEQUENCE [LARGE SCALE GENOMIC DNA]</scope>
    <source>
        <strain>cv. Nipponbare</strain>
    </source>
</reference>
<reference key="3">
    <citation type="journal article" date="2005" name="Nature">
        <title>The map-based sequence of the rice genome.</title>
        <authorList>
            <consortium name="International rice genome sequencing project (IRGSP)"/>
        </authorList>
    </citation>
    <scope>NUCLEOTIDE SEQUENCE [LARGE SCALE GENOMIC DNA]</scope>
    <source>
        <strain>cv. Nipponbare</strain>
    </source>
</reference>
<reference key="4">
    <citation type="journal article" date="2008" name="Nucleic Acids Res.">
        <title>The rice annotation project database (RAP-DB): 2008 update.</title>
        <authorList>
            <consortium name="The rice annotation project (RAP)"/>
        </authorList>
    </citation>
    <scope>GENOME REANNOTATION</scope>
    <source>
        <strain>cv. Nipponbare</strain>
    </source>
</reference>
<reference key="5">
    <citation type="journal article" date="2013" name="Rice">
        <title>Improvement of the Oryza sativa Nipponbare reference genome using next generation sequence and optical map data.</title>
        <authorList>
            <person name="Kawahara Y."/>
            <person name="de la Bastide M."/>
            <person name="Hamilton J.P."/>
            <person name="Kanamori H."/>
            <person name="McCombie W.R."/>
            <person name="Ouyang S."/>
            <person name="Schwartz D.C."/>
            <person name="Tanaka T."/>
            <person name="Wu J."/>
            <person name="Zhou S."/>
            <person name="Childs K.L."/>
            <person name="Davidson R.M."/>
            <person name="Lin H."/>
            <person name="Quesada-Ocampo L."/>
            <person name="Vaillancourt B."/>
            <person name="Sakai H."/>
            <person name="Lee S.S."/>
            <person name="Kim J."/>
            <person name="Numa H."/>
            <person name="Itoh T."/>
            <person name="Buell C.R."/>
            <person name="Matsumoto T."/>
        </authorList>
    </citation>
    <scope>GENOME REANNOTATION</scope>
    <source>
        <strain>cv. Nipponbare</strain>
    </source>
</reference>
<reference key="6">
    <citation type="journal article" date="2003" name="Transgenic Res.">
        <title>Co-expression of a modified maize ribosome-inactivating protein and a rice basic chitinase gene in transgenic rice plants confers enhanced resistance to sheath blight.</title>
        <authorList>
            <person name="Kim J.-K."/>
            <person name="Jang I.-C."/>
            <person name="Wu R."/>
            <person name="Zuo W.-N."/>
            <person name="Boston R.S."/>
            <person name="Lee Y.-H."/>
            <person name="Ahn I.-P."/>
            <person name="Nahm B.H."/>
        </authorList>
    </citation>
    <scope>FUNCTION</scope>
</reference>
<reference key="7">
    <citation type="journal article" date="2006" name="Genome">
        <title>Distribution, structure, organ-specific expression, and phylogenic analysis of the pathogenesis-related protein-3 chitinase gene family in rice (Oryza sativa L.).</title>
        <authorList>
            <person name="Nakazaki T."/>
            <person name="Tsukiyama T."/>
            <person name="Okumoto Y."/>
            <person name="Kageyama D."/>
            <person name="Naito K."/>
            <person name="Inouye K."/>
            <person name="Tanisaka T."/>
        </authorList>
    </citation>
    <scope>GENE FAMILY</scope>
    <scope>NOMENCLATURE</scope>
    <scope>TISSUE SPECIFICITY</scope>
</reference>
<comment type="function">
    <text evidence="4">Hydrolyzes chitin and plays a role in defense against fungal pathogens containing chitin. Its overexpression confers enhanced resistance to sheath blight pathogen (R.solani).</text>
</comment>
<comment type="catalytic activity">
    <reaction>
        <text>Random endo-hydrolysis of N-acetyl-beta-D-glucosaminide (1-&gt;4)-beta-linkages in chitin and chitodextrins.</text>
        <dbReference type="EC" id="3.2.1.14"/>
    </reaction>
</comment>
<comment type="tissue specificity">
    <text evidence="5">Expressed in meristems and at lower levels in roots and sheaths.</text>
</comment>
<comment type="similarity">
    <text evidence="6">Belongs to the glycosyl hydrolase 19 family. Chitinase class I subfamily.</text>
</comment>
<comment type="sequence caution" evidence="6">
    <conflict type="frameshift" ref="1"/>
</comment>
<comment type="sequence caution" evidence="6">
    <conflict type="miscellaneous discrepancy" ref="1"/>
    <text>Sequencing errors.</text>
</comment>
<protein>
    <recommendedName>
        <fullName>Chitinase 12</fullName>
        <ecNumber>3.2.1.14</ecNumber>
    </recommendedName>
    <alternativeName>
        <fullName>Basic endochitinase 2</fullName>
    </alternativeName>
    <alternativeName>
        <fullName>Pathogenesis related (PR)-3 chitinase 12</fullName>
    </alternativeName>
</protein>
<name>CHI12_ORYSJ</name>